<reference key="1">
    <citation type="journal article" date="2018" name="Proc. Natl. Acad. Sci. U.S.A.">
        <title>Solution of the multistep pathway for assembly of corynanthean, strychnos, iboga, and aspidosperma monoterpenoid indole alkaloids from 19E-geissoschizine.</title>
        <authorList>
            <person name="Qu Y."/>
            <person name="Easson M.E.A.M."/>
            <person name="Simionescu R."/>
            <person name="Hajicek J."/>
            <person name="Thamm A.M.K."/>
            <person name="Salim V."/>
            <person name="De Luca V."/>
        </authorList>
    </citation>
    <scope>NUCLEOTIDE SEQUENCE [MRNA]</scope>
    <scope>FUNCTION</scope>
    <scope>DISRUPTION PHENOTYPE</scope>
    <scope>CATALYTIC ACTIVITY</scope>
    <scope>PATHWAY</scope>
</reference>
<reference key="2">
    <citation type="journal article" date="2019" name="Plant J.">
        <title>Completion of the canonical pathway for assembly of anticancer drugs vincristine/vinblastine in Catharanthus roseus.</title>
        <authorList>
            <person name="Qu Y."/>
            <person name="Safonova O."/>
            <person name="De Luca V."/>
        </authorList>
    </citation>
    <scope>TISSUE SPECIFICITY</scope>
    <source>
        <strain>cv. Little Delicata</strain>
    </source>
</reference>
<organism>
    <name type="scientific">Catharanthus roseus</name>
    <name type="common">Madagascar periwinkle</name>
    <name type="synonym">Vinca rosea</name>
    <dbReference type="NCBI Taxonomy" id="4058"/>
    <lineage>
        <taxon>Eukaryota</taxon>
        <taxon>Viridiplantae</taxon>
        <taxon>Streptophyta</taxon>
        <taxon>Embryophyta</taxon>
        <taxon>Tracheophyta</taxon>
        <taxon>Spermatophyta</taxon>
        <taxon>Magnoliopsida</taxon>
        <taxon>eudicotyledons</taxon>
        <taxon>Gunneridae</taxon>
        <taxon>Pentapetalae</taxon>
        <taxon>asterids</taxon>
        <taxon>lamiids</taxon>
        <taxon>Gentianales</taxon>
        <taxon>Apocynaceae</taxon>
        <taxon>Rauvolfioideae</taxon>
        <taxon>Vinceae</taxon>
        <taxon>Catharanthinae</taxon>
        <taxon>Catharanthus</taxon>
    </lineage>
</organism>
<dbReference type="EC" id="2.3.1.323" evidence="3"/>
<dbReference type="EMBL" id="MF770511">
    <property type="protein sequence ID" value="AVM85919.1"/>
    <property type="molecule type" value="mRNA"/>
</dbReference>
<dbReference type="SMR" id="A0A2P1GIW7"/>
<dbReference type="KEGG" id="ag:AVM85919"/>
<dbReference type="OrthoDB" id="671439at2759"/>
<dbReference type="BioCyc" id="MetaCyc:MONOMER-20644"/>
<dbReference type="GO" id="GO:0016747">
    <property type="term" value="F:acyltransferase activity, transferring groups other than amino-acyl groups"/>
    <property type="evidence" value="ECO:0007669"/>
    <property type="project" value="UniProtKB-ARBA"/>
</dbReference>
<dbReference type="GO" id="GO:0016491">
    <property type="term" value="F:oxidoreductase activity"/>
    <property type="evidence" value="ECO:0007669"/>
    <property type="project" value="UniProtKB-KW"/>
</dbReference>
<dbReference type="GO" id="GO:0009820">
    <property type="term" value="P:alkaloid metabolic process"/>
    <property type="evidence" value="ECO:0007669"/>
    <property type="project" value="UniProtKB-KW"/>
</dbReference>
<dbReference type="Gene3D" id="3.30.559.10">
    <property type="entry name" value="Chloramphenicol acetyltransferase-like domain"/>
    <property type="match status" value="2"/>
</dbReference>
<dbReference type="InterPro" id="IPR023213">
    <property type="entry name" value="CAT-like_dom_sf"/>
</dbReference>
<dbReference type="PANTHER" id="PTHR31623">
    <property type="entry name" value="F21J9.9"/>
    <property type="match status" value="1"/>
</dbReference>
<dbReference type="PANTHER" id="PTHR31623:SF110">
    <property type="entry name" value="VINORINE SYNTHASE-LIKE"/>
    <property type="match status" value="1"/>
</dbReference>
<dbReference type="Pfam" id="PF02458">
    <property type="entry name" value="Transferase"/>
    <property type="match status" value="1"/>
</dbReference>
<name>SAT_CATRO</name>
<evidence type="ECO:0000250" key="1">
    <source>
        <dbReference type="UniProtKB" id="Q70PR7"/>
    </source>
</evidence>
<evidence type="ECO:0000256" key="2">
    <source>
        <dbReference type="SAM" id="MobiDB-lite"/>
    </source>
</evidence>
<evidence type="ECO:0000269" key="3">
    <source>
    </source>
</evidence>
<evidence type="ECO:0000269" key="4">
    <source>
    </source>
</evidence>
<evidence type="ECO:0000303" key="5">
    <source>
    </source>
</evidence>
<evidence type="ECO:0000305" key="6"/>
<gene>
    <name evidence="5" type="primary">SAT</name>
</gene>
<feature type="initiator methionine" description="Removed" evidence="1">
    <location>
        <position position="1"/>
    </location>
</feature>
<feature type="chain" id="PRO_0000446427" description="Stemmadenine O-acetyltransferase">
    <location>
        <begin position="2"/>
        <end position="421"/>
    </location>
</feature>
<feature type="region of interest" description="Disordered" evidence="2">
    <location>
        <begin position="1"/>
        <end position="21"/>
    </location>
</feature>
<feature type="active site" description="Proton acceptor" evidence="1">
    <location>
        <position position="160"/>
    </location>
</feature>
<feature type="active site" description="Proton acceptor" evidence="1">
    <location>
        <position position="362"/>
    </location>
</feature>
<protein>
    <recommendedName>
        <fullName evidence="5">Stemmadenine O-acetyltransferase</fullName>
        <shortName evidence="5">CrSAT</shortName>
        <ecNumber evidence="3">2.3.1.323</ecNumber>
    </recommendedName>
</protein>
<accession>A0A2P1GIW7</accession>
<keyword id="KW-0012">Acyltransferase</keyword>
<keyword id="KW-0017">Alkaloid metabolism</keyword>
<keyword id="KW-0808">Transferase</keyword>
<sequence length="421" mass="47005">MAPQMQILSEELIQPSSPTPQTLKTHKLSHLDQVLLTCHIPIILFYPNQLDSNLDRAQRSENLKRSLSTVLTQFYPLAGRININSSVDCNDSGVPFLEARVHSQLSEAIKNVAIDELNQYLPFQPYPGGEESGLKKDIPLAVKISCFECGGTAIGVCISHKIADALSLATFLNSWTATCQEETDIVQPNFDLGSHHFPPMESIPAPEFLPDENIVMKRFVFDKEKLEALKAQLASSATEVKNSSRVQIVIAVIWKQFIDVTRAKFDTKNKLVAAQAVNLRSRMNPPFPQSAMGNIATMAYAVAEEDKDFSDLVGPLKTSLAKIDDEHVKELQKGVTYLDYEAEPQELFSFSSWCRLGFYDLDFGWGKPVSVCTTTVPMKNLVYLMDTRNEDGMEAWISMAEDEMSMLSSDFLSLLDTDFSN</sequence>
<proteinExistence type="evidence at protein level"/>
<comment type="function">
    <text evidence="3">Component of iboga and aspidosperma monoterpenoid indole alkaloids (MIAs, e.g. tabersonine and catharanthine) biosynthesis pathway from 19E-geissoschizine. Acetyltransferase that catalyzes the formation of O-acetylstemmadenine from stemmadenine.</text>
</comment>
<comment type="catalytic activity">
    <reaction evidence="3">
        <text>15alpha-stemmadenine + acetyl-CoA = O-acetyl-15alpha-stemmadenine + CoA</text>
        <dbReference type="Rhea" id="RHEA:58568"/>
        <dbReference type="ChEBI" id="CHEBI:57287"/>
        <dbReference type="ChEBI" id="CHEBI:57288"/>
        <dbReference type="ChEBI" id="CHEBI:142673"/>
        <dbReference type="ChEBI" id="CHEBI:142674"/>
        <dbReference type="EC" id="2.3.1.323"/>
    </reaction>
    <physiologicalReaction direction="left-to-right" evidence="3">
        <dbReference type="Rhea" id="RHEA:58569"/>
    </physiologicalReaction>
</comment>
<comment type="pathway">
    <text evidence="3">Alkaloid biosynthesis.</text>
</comment>
<comment type="subunit">
    <text evidence="1">Monomer.</text>
</comment>
<comment type="tissue specificity">
    <text evidence="4">Expressed in leaf epidermis.</text>
</comment>
<comment type="disruption phenotype">
    <text evidence="3">Abnormal presence of stemmadenine, but normal accumulation of catharanthine and vindoline.</text>
</comment>
<comment type="similarity">
    <text evidence="6">Belongs to the plant acyltransferase family.</text>
</comment>